<accession>A6WTY4</accession>
<sequence length="573" mass="62983">MRTENTATLNLIWGALILEELARLGVQHVCMAPGSRSTPLTLAAAQQTKLQRHLHFDERGLGFMALGLAKASRAPVAIITTSGTAVANLYPAIVEAWLTHVPLIVLSGDRPPELLGCGANQAIVQPGIFANYATQVNLPTPDMHIAPQALLTTVDEAVANQTRPVHINCMYREPLYPSELGGAILDAESPYLKPLQTWLQLARPYTQYGKSKQLSSPSDDAIMRFVHGKGVIVVGTLTPEQDPQQLIALSQKIGWPLLTDAQSQLRQHPAAIGNIDQLLQHPRARNLLQEADRVLVFGGRLLSKRVISYLAEQNWHSYWQVLPEQDRLDPSHNAKHIWHANAEQFAALNWYRSSSANWANTLITYNDELHHLFVRNIDQGEFGEAQVIRAIANTRPLEQQLFIGNSLPVRLYDMYAPVSCCTATTYTNRGASGIDGLLATACGIAAHEGKPTSLIIGDLSQLHDLNSLAIAKGLSSPLVIVILNNDGGNIFNLLPVPNEQVRSDYYRLSHGLEFGYAAAMFNLPYNQVDNLADFQDSYNEALDFQGASIIEVNVSQNQASDQIAALNLWVKQS</sequence>
<keyword id="KW-0460">Magnesium</keyword>
<keyword id="KW-0464">Manganese</keyword>
<keyword id="KW-0474">Menaquinone biosynthesis</keyword>
<keyword id="KW-0479">Metal-binding</keyword>
<keyword id="KW-0786">Thiamine pyrophosphate</keyword>
<keyword id="KW-0808">Transferase</keyword>
<reference key="1">
    <citation type="submission" date="2007-07" db="EMBL/GenBank/DDBJ databases">
        <title>Complete sequence of chromosome of Shewanella baltica OS185.</title>
        <authorList>
            <consortium name="US DOE Joint Genome Institute"/>
            <person name="Copeland A."/>
            <person name="Lucas S."/>
            <person name="Lapidus A."/>
            <person name="Barry K."/>
            <person name="Glavina del Rio T."/>
            <person name="Dalin E."/>
            <person name="Tice H."/>
            <person name="Pitluck S."/>
            <person name="Sims D."/>
            <person name="Brettin T."/>
            <person name="Bruce D."/>
            <person name="Detter J.C."/>
            <person name="Han C."/>
            <person name="Schmutz J."/>
            <person name="Larimer F."/>
            <person name="Land M."/>
            <person name="Hauser L."/>
            <person name="Kyrpides N."/>
            <person name="Mikhailova N."/>
            <person name="Brettar I."/>
            <person name="Rodrigues J."/>
            <person name="Konstantinidis K."/>
            <person name="Tiedje J."/>
            <person name="Richardson P."/>
        </authorList>
    </citation>
    <scope>NUCLEOTIDE SEQUENCE [LARGE SCALE GENOMIC DNA]</scope>
    <source>
        <strain>OS185</strain>
    </source>
</reference>
<proteinExistence type="inferred from homology"/>
<name>MEND_SHEB8</name>
<comment type="function">
    <text evidence="1">Catalyzes the thiamine diphosphate-dependent decarboxylation of 2-oxoglutarate and the subsequent addition of the resulting succinic semialdehyde-thiamine pyrophosphate anion to isochorismate to yield 2-succinyl-5-enolpyruvyl-6-hydroxy-3-cyclohexene-1-carboxylate (SEPHCHC).</text>
</comment>
<comment type="catalytic activity">
    <reaction evidence="1">
        <text>isochorismate + 2-oxoglutarate + H(+) = 5-enolpyruvoyl-6-hydroxy-2-succinyl-cyclohex-3-ene-1-carboxylate + CO2</text>
        <dbReference type="Rhea" id="RHEA:25593"/>
        <dbReference type="ChEBI" id="CHEBI:15378"/>
        <dbReference type="ChEBI" id="CHEBI:16526"/>
        <dbReference type="ChEBI" id="CHEBI:16810"/>
        <dbReference type="ChEBI" id="CHEBI:29780"/>
        <dbReference type="ChEBI" id="CHEBI:58818"/>
        <dbReference type="EC" id="2.2.1.9"/>
    </reaction>
</comment>
<comment type="cofactor">
    <cofactor evidence="1">
        <name>Mg(2+)</name>
        <dbReference type="ChEBI" id="CHEBI:18420"/>
    </cofactor>
    <cofactor evidence="1">
        <name>Mn(2+)</name>
        <dbReference type="ChEBI" id="CHEBI:29035"/>
    </cofactor>
</comment>
<comment type="cofactor">
    <cofactor evidence="1">
        <name>thiamine diphosphate</name>
        <dbReference type="ChEBI" id="CHEBI:58937"/>
    </cofactor>
    <text evidence="1">Binds 1 thiamine pyrophosphate per subunit.</text>
</comment>
<comment type="pathway">
    <text evidence="1">Quinol/quinone metabolism; 1,4-dihydroxy-2-naphthoate biosynthesis; 1,4-dihydroxy-2-naphthoate from chorismate: step 2/7.</text>
</comment>
<comment type="pathway">
    <text evidence="1">Quinol/quinone metabolism; menaquinone biosynthesis.</text>
</comment>
<comment type="subunit">
    <text evidence="1">Homodimer.</text>
</comment>
<comment type="similarity">
    <text evidence="1">Belongs to the TPP enzyme family. MenD subfamily.</text>
</comment>
<feature type="chain" id="PRO_0000341829" description="2-succinyl-5-enolpyruvyl-6-hydroxy-3-cyclohexene-1-carboxylate synthase">
    <location>
        <begin position="1"/>
        <end position="573"/>
    </location>
</feature>
<evidence type="ECO:0000255" key="1">
    <source>
        <dbReference type="HAMAP-Rule" id="MF_01659"/>
    </source>
</evidence>
<gene>
    <name evidence="1" type="primary">menD</name>
    <name type="ordered locus">Shew185_4157</name>
</gene>
<dbReference type="EC" id="2.2.1.9" evidence="1"/>
<dbReference type="EMBL" id="CP000753">
    <property type="protein sequence ID" value="ABS10273.1"/>
    <property type="molecule type" value="Genomic_DNA"/>
</dbReference>
<dbReference type="RefSeq" id="WP_012090534.1">
    <property type="nucleotide sequence ID" value="NC_009665.1"/>
</dbReference>
<dbReference type="SMR" id="A6WTY4"/>
<dbReference type="KEGG" id="sbm:Shew185_4157"/>
<dbReference type="HOGENOM" id="CLU_006051_3_0_6"/>
<dbReference type="UniPathway" id="UPA00079"/>
<dbReference type="UniPathway" id="UPA01057">
    <property type="reaction ID" value="UER00164"/>
</dbReference>
<dbReference type="GO" id="GO:0070204">
    <property type="term" value="F:2-succinyl-5-enolpyruvyl-6-hydroxy-3-cyclohexene-1-carboxylic-acid synthase activity"/>
    <property type="evidence" value="ECO:0007669"/>
    <property type="project" value="UniProtKB-UniRule"/>
</dbReference>
<dbReference type="GO" id="GO:0000287">
    <property type="term" value="F:magnesium ion binding"/>
    <property type="evidence" value="ECO:0007669"/>
    <property type="project" value="UniProtKB-UniRule"/>
</dbReference>
<dbReference type="GO" id="GO:0030145">
    <property type="term" value="F:manganese ion binding"/>
    <property type="evidence" value="ECO:0007669"/>
    <property type="project" value="UniProtKB-UniRule"/>
</dbReference>
<dbReference type="GO" id="GO:0030976">
    <property type="term" value="F:thiamine pyrophosphate binding"/>
    <property type="evidence" value="ECO:0007669"/>
    <property type="project" value="UniProtKB-UniRule"/>
</dbReference>
<dbReference type="GO" id="GO:0009234">
    <property type="term" value="P:menaquinone biosynthetic process"/>
    <property type="evidence" value="ECO:0007669"/>
    <property type="project" value="UniProtKB-UniRule"/>
</dbReference>
<dbReference type="CDD" id="cd07037">
    <property type="entry name" value="TPP_PYR_MenD"/>
    <property type="match status" value="1"/>
</dbReference>
<dbReference type="CDD" id="cd02009">
    <property type="entry name" value="TPP_SHCHC_synthase"/>
    <property type="match status" value="1"/>
</dbReference>
<dbReference type="Gene3D" id="3.40.50.970">
    <property type="match status" value="2"/>
</dbReference>
<dbReference type="Gene3D" id="3.40.50.1220">
    <property type="entry name" value="TPP-binding domain"/>
    <property type="match status" value="1"/>
</dbReference>
<dbReference type="HAMAP" id="MF_01659">
    <property type="entry name" value="MenD"/>
    <property type="match status" value="1"/>
</dbReference>
<dbReference type="InterPro" id="IPR029035">
    <property type="entry name" value="DHS-like_NAD/FAD-binding_dom"/>
</dbReference>
<dbReference type="InterPro" id="IPR004433">
    <property type="entry name" value="MenaQ_synth_MenD"/>
</dbReference>
<dbReference type="InterPro" id="IPR032264">
    <property type="entry name" value="MenD_middle"/>
</dbReference>
<dbReference type="InterPro" id="IPR029061">
    <property type="entry name" value="THDP-binding"/>
</dbReference>
<dbReference type="InterPro" id="IPR012001">
    <property type="entry name" value="Thiamin_PyroP_enz_TPP-bd_dom"/>
</dbReference>
<dbReference type="InterPro" id="IPR011766">
    <property type="entry name" value="TPP_enzyme_TPP-bd"/>
</dbReference>
<dbReference type="NCBIfam" id="TIGR00173">
    <property type="entry name" value="menD"/>
    <property type="match status" value="1"/>
</dbReference>
<dbReference type="PANTHER" id="PTHR42916">
    <property type="entry name" value="2-SUCCINYL-5-ENOLPYRUVYL-6-HYDROXY-3-CYCLOHEXENE-1-CARBOXYLATE SYNTHASE"/>
    <property type="match status" value="1"/>
</dbReference>
<dbReference type="PANTHER" id="PTHR42916:SF1">
    <property type="entry name" value="PROTEIN PHYLLO, CHLOROPLASTIC"/>
    <property type="match status" value="1"/>
</dbReference>
<dbReference type="Pfam" id="PF02775">
    <property type="entry name" value="TPP_enzyme_C"/>
    <property type="match status" value="1"/>
</dbReference>
<dbReference type="Pfam" id="PF16582">
    <property type="entry name" value="TPP_enzyme_M_2"/>
    <property type="match status" value="1"/>
</dbReference>
<dbReference type="Pfam" id="PF02776">
    <property type="entry name" value="TPP_enzyme_N"/>
    <property type="match status" value="1"/>
</dbReference>
<dbReference type="PIRSF" id="PIRSF004983">
    <property type="entry name" value="MenD"/>
    <property type="match status" value="1"/>
</dbReference>
<dbReference type="SUPFAM" id="SSF52467">
    <property type="entry name" value="DHS-like NAD/FAD-binding domain"/>
    <property type="match status" value="1"/>
</dbReference>
<dbReference type="SUPFAM" id="SSF52518">
    <property type="entry name" value="Thiamin diphosphate-binding fold (THDP-binding)"/>
    <property type="match status" value="2"/>
</dbReference>
<protein>
    <recommendedName>
        <fullName evidence="1">2-succinyl-5-enolpyruvyl-6-hydroxy-3-cyclohexene-1-carboxylate synthase</fullName>
        <shortName evidence="1">SEPHCHC synthase</shortName>
        <ecNumber evidence="1">2.2.1.9</ecNumber>
    </recommendedName>
    <alternativeName>
        <fullName evidence="1">Menaquinone biosynthesis protein MenD</fullName>
    </alternativeName>
</protein>
<organism>
    <name type="scientific">Shewanella baltica (strain OS185)</name>
    <dbReference type="NCBI Taxonomy" id="402882"/>
    <lineage>
        <taxon>Bacteria</taxon>
        <taxon>Pseudomonadati</taxon>
        <taxon>Pseudomonadota</taxon>
        <taxon>Gammaproteobacteria</taxon>
        <taxon>Alteromonadales</taxon>
        <taxon>Shewanellaceae</taxon>
        <taxon>Shewanella</taxon>
    </lineage>
</organism>